<gene>
    <name evidence="1" type="primary">rpsM</name>
    <name type="ordered locus">BTH_I3045</name>
</gene>
<keyword id="KW-0687">Ribonucleoprotein</keyword>
<keyword id="KW-0689">Ribosomal protein</keyword>
<keyword id="KW-0694">RNA-binding</keyword>
<keyword id="KW-0699">rRNA-binding</keyword>
<keyword id="KW-0820">tRNA-binding</keyword>
<evidence type="ECO:0000255" key="1">
    <source>
        <dbReference type="HAMAP-Rule" id="MF_01315"/>
    </source>
</evidence>
<evidence type="ECO:0000256" key="2">
    <source>
        <dbReference type="SAM" id="MobiDB-lite"/>
    </source>
</evidence>
<evidence type="ECO:0000305" key="3"/>
<feature type="chain" id="PRO_0000306579" description="Small ribosomal subunit protein uS13">
    <location>
        <begin position="1"/>
        <end position="121"/>
    </location>
</feature>
<feature type="region of interest" description="Disordered" evidence="2">
    <location>
        <begin position="92"/>
        <end position="121"/>
    </location>
</feature>
<organism>
    <name type="scientific">Burkholderia thailandensis (strain ATCC 700388 / DSM 13276 / CCUG 48851 / CIP 106301 / E264)</name>
    <dbReference type="NCBI Taxonomy" id="271848"/>
    <lineage>
        <taxon>Bacteria</taxon>
        <taxon>Pseudomonadati</taxon>
        <taxon>Pseudomonadota</taxon>
        <taxon>Betaproteobacteria</taxon>
        <taxon>Burkholderiales</taxon>
        <taxon>Burkholderiaceae</taxon>
        <taxon>Burkholderia</taxon>
        <taxon>pseudomallei group</taxon>
    </lineage>
</organism>
<dbReference type="EMBL" id="CP000086">
    <property type="protein sequence ID" value="ABC38860.1"/>
    <property type="molecule type" value="Genomic_DNA"/>
</dbReference>
<dbReference type="RefSeq" id="WP_009888432.1">
    <property type="nucleotide sequence ID" value="NZ_CP008786.1"/>
</dbReference>
<dbReference type="SMR" id="Q2SU50"/>
<dbReference type="GeneID" id="45122733"/>
<dbReference type="KEGG" id="bte:BTH_I3045"/>
<dbReference type="HOGENOM" id="CLU_103849_1_2_4"/>
<dbReference type="Proteomes" id="UP000001930">
    <property type="component" value="Chromosome I"/>
</dbReference>
<dbReference type="GO" id="GO:0005829">
    <property type="term" value="C:cytosol"/>
    <property type="evidence" value="ECO:0007669"/>
    <property type="project" value="TreeGrafter"/>
</dbReference>
<dbReference type="GO" id="GO:0015935">
    <property type="term" value="C:small ribosomal subunit"/>
    <property type="evidence" value="ECO:0007669"/>
    <property type="project" value="TreeGrafter"/>
</dbReference>
<dbReference type="GO" id="GO:0019843">
    <property type="term" value="F:rRNA binding"/>
    <property type="evidence" value="ECO:0007669"/>
    <property type="project" value="UniProtKB-UniRule"/>
</dbReference>
<dbReference type="GO" id="GO:0003735">
    <property type="term" value="F:structural constituent of ribosome"/>
    <property type="evidence" value="ECO:0007669"/>
    <property type="project" value="InterPro"/>
</dbReference>
<dbReference type="GO" id="GO:0000049">
    <property type="term" value="F:tRNA binding"/>
    <property type="evidence" value="ECO:0007669"/>
    <property type="project" value="UniProtKB-UniRule"/>
</dbReference>
<dbReference type="GO" id="GO:0006412">
    <property type="term" value="P:translation"/>
    <property type="evidence" value="ECO:0007669"/>
    <property type="project" value="UniProtKB-UniRule"/>
</dbReference>
<dbReference type="FunFam" id="1.10.8.50:FF:000001">
    <property type="entry name" value="30S ribosomal protein S13"/>
    <property type="match status" value="1"/>
</dbReference>
<dbReference type="FunFam" id="4.10.910.10:FF:000001">
    <property type="entry name" value="30S ribosomal protein S13"/>
    <property type="match status" value="1"/>
</dbReference>
<dbReference type="Gene3D" id="1.10.8.50">
    <property type="match status" value="1"/>
</dbReference>
<dbReference type="Gene3D" id="4.10.910.10">
    <property type="entry name" value="30s ribosomal protein s13, domain 2"/>
    <property type="match status" value="1"/>
</dbReference>
<dbReference type="HAMAP" id="MF_01315">
    <property type="entry name" value="Ribosomal_uS13"/>
    <property type="match status" value="1"/>
</dbReference>
<dbReference type="InterPro" id="IPR027437">
    <property type="entry name" value="Rbsml_uS13_C"/>
</dbReference>
<dbReference type="InterPro" id="IPR001892">
    <property type="entry name" value="Ribosomal_uS13"/>
</dbReference>
<dbReference type="InterPro" id="IPR010979">
    <property type="entry name" value="Ribosomal_uS13-like_H2TH"/>
</dbReference>
<dbReference type="InterPro" id="IPR019980">
    <property type="entry name" value="Ribosomal_uS13_bac-type"/>
</dbReference>
<dbReference type="InterPro" id="IPR018269">
    <property type="entry name" value="Ribosomal_uS13_CS"/>
</dbReference>
<dbReference type="NCBIfam" id="TIGR03631">
    <property type="entry name" value="uS13_bact"/>
    <property type="match status" value="1"/>
</dbReference>
<dbReference type="PANTHER" id="PTHR10871">
    <property type="entry name" value="30S RIBOSOMAL PROTEIN S13/40S RIBOSOMAL PROTEIN S18"/>
    <property type="match status" value="1"/>
</dbReference>
<dbReference type="PANTHER" id="PTHR10871:SF1">
    <property type="entry name" value="SMALL RIBOSOMAL SUBUNIT PROTEIN US13M"/>
    <property type="match status" value="1"/>
</dbReference>
<dbReference type="Pfam" id="PF00416">
    <property type="entry name" value="Ribosomal_S13"/>
    <property type="match status" value="1"/>
</dbReference>
<dbReference type="PIRSF" id="PIRSF002134">
    <property type="entry name" value="Ribosomal_S13"/>
    <property type="match status" value="1"/>
</dbReference>
<dbReference type="SUPFAM" id="SSF46946">
    <property type="entry name" value="S13-like H2TH domain"/>
    <property type="match status" value="1"/>
</dbReference>
<dbReference type="PROSITE" id="PS00646">
    <property type="entry name" value="RIBOSOMAL_S13_1"/>
    <property type="match status" value="1"/>
</dbReference>
<dbReference type="PROSITE" id="PS50159">
    <property type="entry name" value="RIBOSOMAL_S13_2"/>
    <property type="match status" value="1"/>
</dbReference>
<comment type="function">
    <text evidence="1">Located at the top of the head of the 30S subunit, it contacts several helices of the 16S rRNA. In the 70S ribosome it contacts the 23S rRNA (bridge B1a) and protein L5 of the 50S subunit (bridge B1b), connecting the 2 subunits; these bridges are implicated in subunit movement. Contacts the tRNAs in the A and P-sites.</text>
</comment>
<comment type="subunit">
    <text evidence="1">Part of the 30S ribosomal subunit. Forms a loose heterodimer with protein S19. Forms two bridges to the 50S subunit in the 70S ribosome.</text>
</comment>
<comment type="similarity">
    <text evidence="1">Belongs to the universal ribosomal protein uS13 family.</text>
</comment>
<protein>
    <recommendedName>
        <fullName evidence="1">Small ribosomal subunit protein uS13</fullName>
    </recommendedName>
    <alternativeName>
        <fullName evidence="3">30S ribosomal protein S13</fullName>
    </alternativeName>
</protein>
<accession>Q2SU50</accession>
<sequence>MARIAGVNIPNHQHTEIGLTAIFGIGRTRARSICVASGVAFSKKVKDLTDADLEKLREEVGKFVVEGDLRREVTMNIKRLMDLGCYRGVRHRKGLPMRGQRTRTNARTRKGPRRAAQALKK</sequence>
<proteinExistence type="inferred from homology"/>
<reference key="1">
    <citation type="journal article" date="2005" name="BMC Genomics">
        <title>Bacterial genome adaptation to niches: divergence of the potential virulence genes in three Burkholderia species of different survival strategies.</title>
        <authorList>
            <person name="Kim H.S."/>
            <person name="Schell M.A."/>
            <person name="Yu Y."/>
            <person name="Ulrich R.L."/>
            <person name="Sarria S.H."/>
            <person name="Nierman W.C."/>
            <person name="DeShazer D."/>
        </authorList>
    </citation>
    <scope>NUCLEOTIDE SEQUENCE [LARGE SCALE GENOMIC DNA]</scope>
    <source>
        <strain>ATCC 700388 / DSM 13276 / CCUG 48851 / CIP 106301 / E264</strain>
    </source>
</reference>
<name>RS13_BURTA</name>